<organism>
    <name type="scientific">Bacillus licheniformis (strain ATCC 14580 / DSM 13 / JCM 2505 / CCUG 7422 / NBRC 12200 / NCIMB 9375 / NCTC 10341 / NRRL NRS-1264 / Gibson 46)</name>
    <dbReference type="NCBI Taxonomy" id="279010"/>
    <lineage>
        <taxon>Bacteria</taxon>
        <taxon>Bacillati</taxon>
        <taxon>Bacillota</taxon>
        <taxon>Bacilli</taxon>
        <taxon>Bacillales</taxon>
        <taxon>Bacillaceae</taxon>
        <taxon>Bacillus</taxon>
    </lineage>
</organism>
<name>METE_BACLD</name>
<evidence type="ECO:0000255" key="1">
    <source>
        <dbReference type="HAMAP-Rule" id="MF_00172"/>
    </source>
</evidence>
<comment type="function">
    <text evidence="1">Catalyzes the transfer of a methyl group from 5-methyltetrahydrofolate to homocysteine resulting in methionine formation.</text>
</comment>
<comment type="catalytic activity">
    <reaction evidence="1">
        <text>5-methyltetrahydropteroyltri-L-glutamate + L-homocysteine = tetrahydropteroyltri-L-glutamate + L-methionine</text>
        <dbReference type="Rhea" id="RHEA:21196"/>
        <dbReference type="ChEBI" id="CHEBI:57844"/>
        <dbReference type="ChEBI" id="CHEBI:58140"/>
        <dbReference type="ChEBI" id="CHEBI:58199"/>
        <dbReference type="ChEBI" id="CHEBI:58207"/>
        <dbReference type="EC" id="2.1.1.14"/>
    </reaction>
</comment>
<comment type="cofactor">
    <cofactor evidence="1">
        <name>Zn(2+)</name>
        <dbReference type="ChEBI" id="CHEBI:29105"/>
    </cofactor>
    <text evidence="1">Binds 1 zinc ion per subunit.</text>
</comment>
<comment type="pathway">
    <text evidence="1">Amino-acid biosynthesis; L-methionine biosynthesis via de novo pathway; L-methionine from L-homocysteine (MetE route): step 1/1.</text>
</comment>
<comment type="similarity">
    <text evidence="1">Belongs to the vitamin-B12 independent methionine synthase family.</text>
</comment>
<gene>
    <name evidence="1" type="primary">metE</name>
    <name type="ordered locus">BLi01422</name>
    <name type="ordered locus">BL03738</name>
</gene>
<keyword id="KW-0028">Amino-acid biosynthesis</keyword>
<keyword id="KW-0479">Metal-binding</keyword>
<keyword id="KW-0486">Methionine biosynthesis</keyword>
<keyword id="KW-0489">Methyltransferase</keyword>
<keyword id="KW-1185">Reference proteome</keyword>
<keyword id="KW-0677">Repeat</keyword>
<keyword id="KW-0808">Transferase</keyword>
<keyword id="KW-0862">Zinc</keyword>
<protein>
    <recommendedName>
        <fullName evidence="1">5-methyltetrahydropteroyltriglutamate--homocysteine methyltransferase</fullName>
        <ecNumber evidence="1">2.1.1.14</ecNumber>
    </recommendedName>
    <alternativeName>
        <fullName evidence="1">Cobalamin-independent methionine synthase</fullName>
    </alternativeName>
    <alternativeName>
        <fullName evidence="1">Methionine synthase, vitamin-B12 independent isozyme</fullName>
    </alternativeName>
</protein>
<sequence>MTNVKTSSLGFPRIGLNREWKKSLEAYWKGNTDRETFLKEMDEQFLAALQTQLDQQIDIIPVSDFTMYDHVLDTAVMFNWIPDRFKDINDPLDTYFAMARGTKDAVSSEMTKWFNTNYHYIVPEYEKGAQYRVTRNKPLQDYQRAKAALGTETKPVILGLYTFVALAKGYEQQDIKDIYNQMTPLYIQVLKELEQEGVKWVQIDEPALVTASPEEAAAVKEIYQTITEEVSELNILLQTYFDSVDAYEELISFPVAGIGLDFVHDKGKNFEHLKAHGFPKDKVLAAGILDGRNIWKANLEERLDLTLELIQRAGVDEVWIQPSNSLLHVPVAKHPGEHLADDLLNGLSFAKEKLLELTLLKNGLVSGKAAIQAEIDEAHGHLQDLKQYGAATNSAFAEERGKLTEEDFKRPTAFEERLRIQNDSLGLPLLPTTTIGSFPQTADVRSARQKWRKKEWSDEQYEAFIQEETKKWIDIQEDLGLDVLVHGEFERTDMVEYFGEKLGGFAFTKYAWVQSYGSRCVRPPVIYGDVEFKEPMTVKETVYAQSLTSKKVKGMLTGPVTILNWSFARYDLPRKEIAFQIACALRKEVEALEKAGIQIIQVDEPALREGLPLKERDWDEYLKWAAEAFRLSTSSVEDTTQIHTHMCYSNFEDIVDAIEDLDADVITIEHSRSHGGFLDYLEQHPYLKGLGLGVYDIHSPRVPSSDEMLTIIEDALKVCPADRFWVNPDCGLKTRQPEETIAALKNMVEAAKQARGKLAQTV</sequence>
<proteinExistence type="inferred from homology"/>
<dbReference type="EC" id="2.1.1.14" evidence="1"/>
<dbReference type="EMBL" id="CP000002">
    <property type="protein sequence ID" value="AAU22973.1"/>
    <property type="molecule type" value="Genomic_DNA"/>
</dbReference>
<dbReference type="EMBL" id="AE017333">
    <property type="protein sequence ID" value="AAU40326.1"/>
    <property type="molecule type" value="Genomic_DNA"/>
</dbReference>
<dbReference type="RefSeq" id="WP_011197832.1">
    <property type="nucleotide sequence ID" value="NC_006322.1"/>
</dbReference>
<dbReference type="SMR" id="Q65KT8"/>
<dbReference type="STRING" id="279010.BL03738"/>
<dbReference type="GeneID" id="92861994"/>
<dbReference type="KEGG" id="bld:BLi01422"/>
<dbReference type="KEGG" id="bli:BL03738"/>
<dbReference type="PATRIC" id="fig|279010.13.peg.1414"/>
<dbReference type="eggNOG" id="COG0620">
    <property type="taxonomic scope" value="Bacteria"/>
</dbReference>
<dbReference type="HOGENOM" id="CLU_013175_0_0_9"/>
<dbReference type="UniPathway" id="UPA00051">
    <property type="reaction ID" value="UER00082"/>
</dbReference>
<dbReference type="Proteomes" id="UP000000606">
    <property type="component" value="Chromosome"/>
</dbReference>
<dbReference type="GO" id="GO:0003871">
    <property type="term" value="F:5-methyltetrahydropteroyltriglutamate-homocysteine S-methyltransferase activity"/>
    <property type="evidence" value="ECO:0007669"/>
    <property type="project" value="UniProtKB-UniRule"/>
</dbReference>
<dbReference type="GO" id="GO:0008270">
    <property type="term" value="F:zinc ion binding"/>
    <property type="evidence" value="ECO:0007669"/>
    <property type="project" value="InterPro"/>
</dbReference>
<dbReference type="GO" id="GO:0009086">
    <property type="term" value="P:methionine biosynthetic process"/>
    <property type="evidence" value="ECO:0007669"/>
    <property type="project" value="UniProtKB-UniRule"/>
</dbReference>
<dbReference type="GO" id="GO:0032259">
    <property type="term" value="P:methylation"/>
    <property type="evidence" value="ECO:0007669"/>
    <property type="project" value="UniProtKB-KW"/>
</dbReference>
<dbReference type="CDD" id="cd03311">
    <property type="entry name" value="CIMS_C_terminal_like"/>
    <property type="match status" value="1"/>
</dbReference>
<dbReference type="CDD" id="cd03312">
    <property type="entry name" value="CIMS_N_terminal_like"/>
    <property type="match status" value="1"/>
</dbReference>
<dbReference type="Gene3D" id="3.20.20.210">
    <property type="match status" value="2"/>
</dbReference>
<dbReference type="HAMAP" id="MF_00172">
    <property type="entry name" value="Meth_synth"/>
    <property type="match status" value="1"/>
</dbReference>
<dbReference type="InterPro" id="IPR013215">
    <property type="entry name" value="Cbl-indep_Met_Synth_N"/>
</dbReference>
<dbReference type="InterPro" id="IPR006276">
    <property type="entry name" value="Cobalamin-indep_Met_synthase"/>
</dbReference>
<dbReference type="InterPro" id="IPR002629">
    <property type="entry name" value="Met_Synth_C/arc"/>
</dbReference>
<dbReference type="InterPro" id="IPR038071">
    <property type="entry name" value="UROD/MetE-like_sf"/>
</dbReference>
<dbReference type="NCBIfam" id="TIGR01371">
    <property type="entry name" value="met_syn_B12ind"/>
    <property type="match status" value="1"/>
</dbReference>
<dbReference type="NCBIfam" id="NF003556">
    <property type="entry name" value="PRK05222.1"/>
    <property type="match status" value="1"/>
</dbReference>
<dbReference type="PANTHER" id="PTHR30519">
    <property type="entry name" value="5-METHYLTETRAHYDROPTEROYLTRIGLUTAMATE--HOMOCYSTEINE METHYLTRANSFERASE"/>
    <property type="match status" value="1"/>
</dbReference>
<dbReference type="Pfam" id="PF08267">
    <property type="entry name" value="Meth_synt_1"/>
    <property type="match status" value="1"/>
</dbReference>
<dbReference type="Pfam" id="PF01717">
    <property type="entry name" value="Meth_synt_2"/>
    <property type="match status" value="1"/>
</dbReference>
<dbReference type="PIRSF" id="PIRSF000382">
    <property type="entry name" value="MeTrfase_B12_ind"/>
    <property type="match status" value="1"/>
</dbReference>
<dbReference type="SUPFAM" id="SSF51726">
    <property type="entry name" value="UROD/MetE-like"/>
    <property type="match status" value="2"/>
</dbReference>
<reference key="1">
    <citation type="journal article" date="2004" name="J. Mol. Microbiol. Biotechnol.">
        <title>The complete genome sequence of Bacillus licheniformis DSM13, an organism with great industrial potential.</title>
        <authorList>
            <person name="Veith B."/>
            <person name="Herzberg C."/>
            <person name="Steckel S."/>
            <person name="Feesche J."/>
            <person name="Maurer K.H."/>
            <person name="Ehrenreich P."/>
            <person name="Baeumer S."/>
            <person name="Henne A."/>
            <person name="Liesegang H."/>
            <person name="Merkl R."/>
            <person name="Ehrenreich A."/>
            <person name="Gottschalk G."/>
        </authorList>
    </citation>
    <scope>NUCLEOTIDE SEQUENCE [LARGE SCALE GENOMIC DNA]</scope>
    <source>
        <strain>ATCC 14580 / DSM 13 / JCM 2505 / CCUG 7422 / NBRC 12200 / NCIMB 9375 / NCTC 10341 / NRRL NRS-1264 / Gibson 46</strain>
    </source>
</reference>
<reference key="2">
    <citation type="journal article" date="2004" name="Genome Biol.">
        <title>Complete genome sequence of the industrial bacterium Bacillus licheniformis and comparisons with closely related Bacillus species.</title>
        <authorList>
            <person name="Rey M.W."/>
            <person name="Ramaiya P."/>
            <person name="Nelson B.A."/>
            <person name="Brody-Karpin S.D."/>
            <person name="Zaretsky E.J."/>
            <person name="Tang M."/>
            <person name="Lopez de Leon A."/>
            <person name="Xiang H."/>
            <person name="Gusti V."/>
            <person name="Clausen I.G."/>
            <person name="Olsen P.B."/>
            <person name="Rasmussen M.D."/>
            <person name="Andersen J.T."/>
            <person name="Joergensen P.L."/>
            <person name="Larsen T.S."/>
            <person name="Sorokin A."/>
            <person name="Bolotin A."/>
            <person name="Lapidus A."/>
            <person name="Galleron N."/>
            <person name="Ehrlich S.D."/>
            <person name="Berka R.M."/>
        </authorList>
    </citation>
    <scope>NUCLEOTIDE SEQUENCE [LARGE SCALE GENOMIC DNA]</scope>
    <source>
        <strain>ATCC 14580 / DSM 13 / JCM 2505 / CCUG 7422 / NBRC 12200 / NCIMB 9375 / NCTC 10341 / NRRL NRS-1264 / Gibson 46</strain>
    </source>
</reference>
<accession>Q65KT8</accession>
<accession>Q62W85</accession>
<feature type="chain" id="PRO_1000017223" description="5-methyltetrahydropteroyltriglutamate--homocysteine methyltransferase">
    <location>
        <begin position="1"/>
        <end position="762"/>
    </location>
</feature>
<feature type="active site" description="Proton donor" evidence="1">
    <location>
        <position position="698"/>
    </location>
</feature>
<feature type="binding site" evidence="1">
    <location>
        <begin position="18"/>
        <end position="21"/>
    </location>
    <ligand>
        <name>5-methyltetrahydropteroyltri-L-glutamate</name>
        <dbReference type="ChEBI" id="CHEBI:58207"/>
    </ligand>
</feature>
<feature type="binding site" evidence="1">
    <location>
        <position position="112"/>
    </location>
    <ligand>
        <name>5-methyltetrahydropteroyltri-L-glutamate</name>
        <dbReference type="ChEBI" id="CHEBI:58207"/>
    </ligand>
</feature>
<feature type="binding site" evidence="1">
    <location>
        <begin position="435"/>
        <end position="437"/>
    </location>
    <ligand>
        <name>L-homocysteine</name>
        <dbReference type="ChEBI" id="CHEBI:58199"/>
    </ligand>
</feature>
<feature type="binding site" evidence="1">
    <location>
        <begin position="435"/>
        <end position="437"/>
    </location>
    <ligand>
        <name>L-methionine</name>
        <dbReference type="ChEBI" id="CHEBI:57844"/>
    </ligand>
</feature>
<feature type="binding site" evidence="1">
    <location>
        <position position="488"/>
    </location>
    <ligand>
        <name>L-homocysteine</name>
        <dbReference type="ChEBI" id="CHEBI:58199"/>
    </ligand>
</feature>
<feature type="binding site" evidence="1">
    <location>
        <position position="488"/>
    </location>
    <ligand>
        <name>L-methionine</name>
        <dbReference type="ChEBI" id="CHEBI:57844"/>
    </ligand>
</feature>
<feature type="binding site" evidence="1">
    <location>
        <begin position="519"/>
        <end position="520"/>
    </location>
    <ligand>
        <name>5-methyltetrahydropteroyltri-L-glutamate</name>
        <dbReference type="ChEBI" id="CHEBI:58207"/>
    </ligand>
</feature>
<feature type="binding site" evidence="1">
    <location>
        <position position="565"/>
    </location>
    <ligand>
        <name>5-methyltetrahydropteroyltri-L-glutamate</name>
        <dbReference type="ChEBI" id="CHEBI:58207"/>
    </ligand>
</feature>
<feature type="binding site" evidence="1">
    <location>
        <position position="603"/>
    </location>
    <ligand>
        <name>L-homocysteine</name>
        <dbReference type="ChEBI" id="CHEBI:58199"/>
    </ligand>
</feature>
<feature type="binding site" evidence="1">
    <location>
        <position position="603"/>
    </location>
    <ligand>
        <name>L-methionine</name>
        <dbReference type="ChEBI" id="CHEBI:57844"/>
    </ligand>
</feature>
<feature type="binding site" evidence="1">
    <location>
        <position position="609"/>
    </location>
    <ligand>
        <name>5-methyltetrahydropteroyltri-L-glutamate</name>
        <dbReference type="ChEBI" id="CHEBI:58207"/>
    </ligand>
</feature>
<feature type="binding site" evidence="1">
    <location>
        <position position="645"/>
    </location>
    <ligand>
        <name>Zn(2+)</name>
        <dbReference type="ChEBI" id="CHEBI:29105"/>
        <note>catalytic</note>
    </ligand>
</feature>
<feature type="binding site" evidence="1">
    <location>
        <position position="647"/>
    </location>
    <ligand>
        <name>Zn(2+)</name>
        <dbReference type="ChEBI" id="CHEBI:29105"/>
        <note>catalytic</note>
    </ligand>
</feature>
<feature type="binding site" evidence="1">
    <location>
        <position position="669"/>
    </location>
    <ligand>
        <name>Zn(2+)</name>
        <dbReference type="ChEBI" id="CHEBI:29105"/>
        <note>catalytic</note>
    </ligand>
</feature>
<feature type="binding site" evidence="1">
    <location>
        <position position="730"/>
    </location>
    <ligand>
        <name>Zn(2+)</name>
        <dbReference type="ChEBI" id="CHEBI:29105"/>
        <note>catalytic</note>
    </ligand>
</feature>